<dbReference type="EC" id="7.5.2.3" evidence="2"/>
<dbReference type="EMBL" id="CP000133">
    <property type="protein sequence ID" value="ABC92744.1"/>
    <property type="status" value="ALT_INIT"/>
    <property type="molecule type" value="Genomic_DNA"/>
</dbReference>
<dbReference type="SMR" id="Q2K342"/>
<dbReference type="KEGG" id="ret:RHE_CH04000"/>
<dbReference type="eggNOG" id="COG1132">
    <property type="taxonomic scope" value="Bacteria"/>
</dbReference>
<dbReference type="HOGENOM" id="CLU_000604_84_8_5"/>
<dbReference type="OrthoDB" id="9804259at2"/>
<dbReference type="Proteomes" id="UP000001936">
    <property type="component" value="Chromosome"/>
</dbReference>
<dbReference type="GO" id="GO:0005886">
    <property type="term" value="C:plasma membrane"/>
    <property type="evidence" value="ECO:0007669"/>
    <property type="project" value="UniProtKB-SubCell"/>
</dbReference>
<dbReference type="GO" id="GO:0015441">
    <property type="term" value="F:ABC-type beta-glucan transporter activity"/>
    <property type="evidence" value="ECO:0007669"/>
    <property type="project" value="UniProtKB-EC"/>
</dbReference>
<dbReference type="GO" id="GO:0015421">
    <property type="term" value="F:ABC-type oligopeptide transporter activity"/>
    <property type="evidence" value="ECO:0007669"/>
    <property type="project" value="TreeGrafter"/>
</dbReference>
<dbReference type="GO" id="GO:0005524">
    <property type="term" value="F:ATP binding"/>
    <property type="evidence" value="ECO:0007669"/>
    <property type="project" value="UniProtKB-KW"/>
</dbReference>
<dbReference type="GO" id="GO:0016887">
    <property type="term" value="F:ATP hydrolysis activity"/>
    <property type="evidence" value="ECO:0007669"/>
    <property type="project" value="InterPro"/>
</dbReference>
<dbReference type="CDD" id="cd18562">
    <property type="entry name" value="ABC_6TM_NdvA_beta-glucan_exporter_like"/>
    <property type="match status" value="1"/>
</dbReference>
<dbReference type="CDD" id="cd03254">
    <property type="entry name" value="ABCC_Glucan_exporter_like"/>
    <property type="match status" value="1"/>
</dbReference>
<dbReference type="FunFam" id="3.40.50.300:FF:000221">
    <property type="entry name" value="Multidrug ABC transporter ATP-binding protein"/>
    <property type="match status" value="1"/>
</dbReference>
<dbReference type="Gene3D" id="1.20.1560.10">
    <property type="entry name" value="ABC transporter type 1, transmembrane domain"/>
    <property type="match status" value="1"/>
</dbReference>
<dbReference type="Gene3D" id="3.40.50.300">
    <property type="entry name" value="P-loop containing nucleotide triphosphate hydrolases"/>
    <property type="match status" value="1"/>
</dbReference>
<dbReference type="InterPro" id="IPR003593">
    <property type="entry name" value="AAA+_ATPase"/>
</dbReference>
<dbReference type="InterPro" id="IPR011527">
    <property type="entry name" value="ABC1_TM_dom"/>
</dbReference>
<dbReference type="InterPro" id="IPR036640">
    <property type="entry name" value="ABC1_TM_sf"/>
</dbReference>
<dbReference type="InterPro" id="IPR003439">
    <property type="entry name" value="ABC_transporter-like_ATP-bd"/>
</dbReference>
<dbReference type="InterPro" id="IPR017871">
    <property type="entry name" value="ABC_transporter-like_CS"/>
</dbReference>
<dbReference type="InterPro" id="IPR005896">
    <property type="entry name" value="NdvA"/>
</dbReference>
<dbReference type="InterPro" id="IPR027417">
    <property type="entry name" value="P-loop_NTPase"/>
</dbReference>
<dbReference type="InterPro" id="IPR039421">
    <property type="entry name" value="Type_1_exporter"/>
</dbReference>
<dbReference type="NCBIfam" id="TIGR01192">
    <property type="entry name" value="chvA"/>
    <property type="match status" value="1"/>
</dbReference>
<dbReference type="NCBIfam" id="NF010178">
    <property type="entry name" value="PRK13657.1"/>
    <property type="match status" value="1"/>
</dbReference>
<dbReference type="PANTHER" id="PTHR43394:SF1">
    <property type="entry name" value="ATP-BINDING CASSETTE SUB-FAMILY B MEMBER 10, MITOCHONDRIAL"/>
    <property type="match status" value="1"/>
</dbReference>
<dbReference type="PANTHER" id="PTHR43394">
    <property type="entry name" value="ATP-DEPENDENT PERMEASE MDL1, MITOCHONDRIAL"/>
    <property type="match status" value="1"/>
</dbReference>
<dbReference type="Pfam" id="PF00664">
    <property type="entry name" value="ABC_membrane"/>
    <property type="match status" value="1"/>
</dbReference>
<dbReference type="Pfam" id="PF00005">
    <property type="entry name" value="ABC_tran"/>
    <property type="match status" value="1"/>
</dbReference>
<dbReference type="SMART" id="SM00382">
    <property type="entry name" value="AAA"/>
    <property type="match status" value="1"/>
</dbReference>
<dbReference type="SUPFAM" id="SSF90123">
    <property type="entry name" value="ABC transporter transmembrane region"/>
    <property type="match status" value="1"/>
</dbReference>
<dbReference type="SUPFAM" id="SSF52540">
    <property type="entry name" value="P-loop containing nucleoside triphosphate hydrolases"/>
    <property type="match status" value="1"/>
</dbReference>
<dbReference type="PROSITE" id="PS50929">
    <property type="entry name" value="ABC_TM1F"/>
    <property type="match status" value="1"/>
</dbReference>
<dbReference type="PROSITE" id="PS00211">
    <property type="entry name" value="ABC_TRANSPORTER_1"/>
    <property type="match status" value="1"/>
</dbReference>
<dbReference type="PROSITE" id="PS50893">
    <property type="entry name" value="ABC_TRANSPORTER_2"/>
    <property type="match status" value="1"/>
</dbReference>
<dbReference type="PROSITE" id="PS51317">
    <property type="entry name" value="NDVA"/>
    <property type="match status" value="1"/>
</dbReference>
<gene>
    <name evidence="2" type="primary">ndvA</name>
    <name type="ordered locus">RHE_CH04000</name>
</gene>
<accession>Q2K342</accession>
<comment type="function">
    <text evidence="1">Involved in beta-(1--&gt;2)glucan export. Transmembrane domains (TMD) form a pore in the inner membrane and the ATP-binding domain (NBD) is responsible for energy generation (By similarity).</text>
</comment>
<comment type="catalytic activity">
    <reaction evidence="2">
        <text>[(1-&gt;2)-beta-D-glucosyl](n)(in) + ATP + H2O = [(1-&gt;2)-beta-D-glucosyl](n)(out) + ADP + phosphate + H(+)</text>
        <dbReference type="Rhea" id="RHEA:18453"/>
        <dbReference type="Rhea" id="RHEA-COMP:11881"/>
        <dbReference type="ChEBI" id="CHEBI:15377"/>
        <dbReference type="ChEBI" id="CHEBI:15378"/>
        <dbReference type="ChEBI" id="CHEBI:27517"/>
        <dbReference type="ChEBI" id="CHEBI:30616"/>
        <dbReference type="ChEBI" id="CHEBI:43474"/>
        <dbReference type="ChEBI" id="CHEBI:456216"/>
        <dbReference type="EC" id="7.5.2.3"/>
    </reaction>
</comment>
<comment type="subunit">
    <text evidence="2">Homodimer.</text>
</comment>
<comment type="subcellular location">
    <subcellularLocation>
        <location evidence="2">Cell inner membrane</location>
        <topology evidence="2">Multi-pass membrane protein</topology>
    </subcellularLocation>
</comment>
<comment type="domain">
    <text>In NdvA the ATP-binding domain (NBD) and the transmembrane domain (TMD) are fused.</text>
</comment>
<comment type="similarity">
    <text evidence="2">Belongs to the ABC transporter superfamily. Beta-(1--&gt;2)glucan exporter (TC 3.A.1.108.1) family.</text>
</comment>
<comment type="sequence caution" evidence="3">
    <conflict type="erroneous initiation">
        <sequence resource="EMBL-CDS" id="ABC92744"/>
    </conflict>
</comment>
<feature type="chain" id="PRO_0000290250" description="Beta-(1--&gt;2)glucan export ATP-binding/permease protein NdvA">
    <location>
        <begin position="1"/>
        <end position="587"/>
    </location>
</feature>
<feature type="transmembrane region" description="Helical" evidence="2">
    <location>
        <begin position="23"/>
        <end position="43"/>
    </location>
</feature>
<feature type="transmembrane region" description="Helical" evidence="2">
    <location>
        <begin position="57"/>
        <end position="77"/>
    </location>
</feature>
<feature type="transmembrane region" description="Helical" evidence="2">
    <location>
        <begin position="126"/>
        <end position="146"/>
    </location>
</feature>
<feature type="transmembrane region" description="Helical" evidence="2">
    <location>
        <begin position="158"/>
        <end position="178"/>
    </location>
</feature>
<feature type="transmembrane region" description="Helical" evidence="2">
    <location>
        <begin position="248"/>
        <end position="268"/>
    </location>
</feature>
<feature type="transmembrane region" description="Helical" evidence="2">
    <location>
        <begin position="272"/>
        <end position="292"/>
    </location>
</feature>
<feature type="domain" description="ABC transmembrane type-1" evidence="2">
    <location>
        <begin position="21"/>
        <end position="301"/>
    </location>
</feature>
<feature type="domain" description="ABC transporter" evidence="2">
    <location>
        <begin position="335"/>
        <end position="569"/>
    </location>
</feature>
<feature type="binding site" evidence="2">
    <location>
        <begin position="368"/>
        <end position="375"/>
    </location>
    <ligand>
        <name>ATP</name>
        <dbReference type="ChEBI" id="CHEBI:30616"/>
    </ligand>
</feature>
<keyword id="KW-0067">ATP-binding</keyword>
<keyword id="KW-0997">Cell inner membrane</keyword>
<keyword id="KW-1003">Cell membrane</keyword>
<keyword id="KW-0472">Membrane</keyword>
<keyword id="KW-0547">Nucleotide-binding</keyword>
<keyword id="KW-1185">Reference proteome</keyword>
<keyword id="KW-0762">Sugar transport</keyword>
<keyword id="KW-1278">Translocase</keyword>
<keyword id="KW-0812">Transmembrane</keyword>
<keyword id="KW-1133">Transmembrane helix</keyword>
<keyword id="KW-0813">Transport</keyword>
<protein>
    <recommendedName>
        <fullName evidence="2">Beta-(1--&gt;2)glucan export ATP-binding/permease protein NdvA</fullName>
        <ecNumber evidence="2">7.5.2.3</ecNumber>
    </recommendedName>
</protein>
<evidence type="ECO:0000250" key="1"/>
<evidence type="ECO:0000255" key="2">
    <source>
        <dbReference type="HAMAP-Rule" id="MF_01728"/>
    </source>
</evidence>
<evidence type="ECO:0000305" key="3"/>
<reference key="1">
    <citation type="journal article" date="2006" name="Proc. Natl. Acad. Sci. U.S.A.">
        <title>The partitioned Rhizobium etli genome: genetic and metabolic redundancy in seven interacting replicons.</title>
        <authorList>
            <person name="Gonzalez V."/>
            <person name="Santamaria R.I."/>
            <person name="Bustos P."/>
            <person name="Hernandez-Gonzalez I."/>
            <person name="Medrano-Soto A."/>
            <person name="Moreno-Hagelsieb G."/>
            <person name="Janga S.C."/>
            <person name="Ramirez M.A."/>
            <person name="Jimenez-Jacinto V."/>
            <person name="Collado-Vides J."/>
            <person name="Davila G."/>
        </authorList>
    </citation>
    <scope>NUCLEOTIDE SEQUENCE [LARGE SCALE GENOMIC DNA]</scope>
    <source>
        <strain>ATCC 51251 / DSM 11541 / JCM 21823 / NBRC 15573 / CFN 42</strain>
    </source>
</reference>
<proteinExistence type="inferred from homology"/>
<name>NDVA_RHIEC</name>
<sequence length="587" mass="64700">MSLFKVYARALRYLGAYKLRVSLVVIANIVLATITIAEPILFGRIIDAISGKGEVKPILFMWAAFAVFNTVAFVLVSREADRLAHGRRATLLTEAFGRIISMPLAWHHQRGTSNALHTLLRACETLFGLWLEFMRNHLSTVIALALLVPTAMSMDLRLSAVLIVLGIAYWLIGRVVMSRTKDGQASVENHYHTVFSHVSDSISNVSVLHSYNRIEAETKALKSFANRLLEAQYPVLDWWALASALNRMASTIAMMVVLIIGTMLVQSGELRIGDVIAFIGFANLLIARLDLMRQFATQIFEARSKLEDFYTLEDSVRDREEPAGNGEIKNVKGAIEFRDVSFGFGNSSQGLHNVSFSVKAGQTVAIVGPTGAGKTTLVNLLQRVYDPQGGQILVDGTDITKVTRKSLRRHIATVFQDAGLLNRSISDNIRLGREGASEEDMRRAAEAAAAADFIETREDRYDTHVGERGNKLSGGERQRIAIARAILKDAPILVLDEATSALDVETEARVKAAIDNLRQNRTTFIIAHRLSTVREADMVLFLDDGRVVEQGGFDELSHSNGRFAALLRASGILTDEEVRKAHTTEAA</sequence>
<organism>
    <name type="scientific">Rhizobium etli (strain ATCC 51251 / DSM 11541 / JCM 21823 / NBRC 15573 / CFN 42)</name>
    <dbReference type="NCBI Taxonomy" id="347834"/>
    <lineage>
        <taxon>Bacteria</taxon>
        <taxon>Pseudomonadati</taxon>
        <taxon>Pseudomonadota</taxon>
        <taxon>Alphaproteobacteria</taxon>
        <taxon>Hyphomicrobiales</taxon>
        <taxon>Rhizobiaceae</taxon>
        <taxon>Rhizobium/Agrobacterium group</taxon>
        <taxon>Rhizobium</taxon>
    </lineage>
</organism>